<name>DNAK_LEVBA</name>
<accession>Q03QU1</accession>
<feature type="chain" id="PRO_1000059584" description="Chaperone protein DnaK">
    <location>
        <begin position="1"/>
        <end position="619"/>
    </location>
</feature>
<feature type="region of interest" description="Disordered" evidence="2">
    <location>
        <begin position="579"/>
        <end position="619"/>
    </location>
</feature>
<feature type="compositionally biased region" description="Low complexity" evidence="2">
    <location>
        <begin position="583"/>
        <end position="596"/>
    </location>
</feature>
<feature type="compositionally biased region" description="Basic and acidic residues" evidence="2">
    <location>
        <begin position="597"/>
        <end position="619"/>
    </location>
</feature>
<feature type="modified residue" description="Phosphothreonine; by autocatalysis" evidence="1">
    <location>
        <position position="176"/>
    </location>
</feature>
<reference key="1">
    <citation type="journal article" date="2006" name="Proc. Natl. Acad. Sci. U.S.A.">
        <title>Comparative genomics of the lactic acid bacteria.</title>
        <authorList>
            <person name="Makarova K.S."/>
            <person name="Slesarev A."/>
            <person name="Wolf Y.I."/>
            <person name="Sorokin A."/>
            <person name="Mirkin B."/>
            <person name="Koonin E.V."/>
            <person name="Pavlov A."/>
            <person name="Pavlova N."/>
            <person name="Karamychev V."/>
            <person name="Polouchine N."/>
            <person name="Shakhova V."/>
            <person name="Grigoriev I."/>
            <person name="Lou Y."/>
            <person name="Rohksar D."/>
            <person name="Lucas S."/>
            <person name="Huang K."/>
            <person name="Goodstein D.M."/>
            <person name="Hawkins T."/>
            <person name="Plengvidhya V."/>
            <person name="Welker D."/>
            <person name="Hughes J."/>
            <person name="Goh Y."/>
            <person name="Benson A."/>
            <person name="Baldwin K."/>
            <person name="Lee J.-H."/>
            <person name="Diaz-Muniz I."/>
            <person name="Dosti B."/>
            <person name="Smeianov V."/>
            <person name="Wechter W."/>
            <person name="Barabote R."/>
            <person name="Lorca G."/>
            <person name="Altermann E."/>
            <person name="Barrangou R."/>
            <person name="Ganesan B."/>
            <person name="Xie Y."/>
            <person name="Rawsthorne H."/>
            <person name="Tamir D."/>
            <person name="Parker C."/>
            <person name="Breidt F."/>
            <person name="Broadbent J.R."/>
            <person name="Hutkins R."/>
            <person name="O'Sullivan D."/>
            <person name="Steele J."/>
            <person name="Unlu G."/>
            <person name="Saier M.H. Jr."/>
            <person name="Klaenhammer T."/>
            <person name="Richardson P."/>
            <person name="Kozyavkin S."/>
            <person name="Weimer B.C."/>
            <person name="Mills D.A."/>
        </authorList>
    </citation>
    <scope>NUCLEOTIDE SEQUENCE [LARGE SCALE GENOMIC DNA]</scope>
    <source>
        <strain>ATCC 367 / BCRC 12310 / CIP 105137 / JCM 1170 / LMG 11437 / NCIMB 947 / NCTC 947</strain>
    </source>
</reference>
<sequence length="619" mass="66408">MASNKIIGIDLGTTNSAVAVLEGSTPKIIANKEGARTTPSVVAFKDGETQVGEVAKRQAITNPNTISSIKSHMGEAGYKVSVDGKDYTPQQVSAMILQHLKAFAEDYIGDTVEKAVITVPAYFNDAQRQATKDAGKIAGLSVERIINEPTAAALAYGLDKQDKDEKVLVYDLGGGTFDVSVLELGDGVFDVLSTNGDTHLGGDDFDQKIMDWLVAGFKEENGVDLSKDKMALQRLKDAAEKAKKDLSGVTEAQISLPFISAGENGPLHLEKSLSRAKFNELTADLVEKTRIPVQNALKDADLQASDIDVVILNGGSTRIPAVQEAVKSWTGKEPNHSINPDEAVALGAAVQGGVITGDVKDVVLLDVTPLSLGIETMGGVFTKLIDRNTTIPTSKSQVFSTAADNQPAVDIHVLQGERPMAADNKTLGNFQLTDIPAAPRGVPQIQVTFDIDKNGIVNVSAKDMGTNKEQKITIKSSDGLSDEEIEKMMNEAKENEEADKKRKEEVDTKNEVDQLLFQTDKTLKDVKGKVSDDEIKKAEDARDALKKAQEANNLDDMKAKKDDLTKIIQDLSVKLYQQAQSEAGDGNAAGADGATADADKKDDNTVDGDFHEVNDDDKK</sequence>
<keyword id="KW-0067">ATP-binding</keyword>
<keyword id="KW-0143">Chaperone</keyword>
<keyword id="KW-0547">Nucleotide-binding</keyword>
<keyword id="KW-0597">Phosphoprotein</keyword>
<keyword id="KW-1185">Reference proteome</keyword>
<keyword id="KW-0346">Stress response</keyword>
<comment type="function">
    <text evidence="1">Acts as a chaperone.</text>
</comment>
<comment type="induction">
    <text evidence="1">By stress conditions e.g. heat shock.</text>
</comment>
<comment type="similarity">
    <text evidence="1">Belongs to the heat shock protein 70 family.</text>
</comment>
<gene>
    <name evidence="1" type="primary">dnaK</name>
    <name type="ordered locus">LVIS_1329</name>
</gene>
<evidence type="ECO:0000255" key="1">
    <source>
        <dbReference type="HAMAP-Rule" id="MF_00332"/>
    </source>
</evidence>
<evidence type="ECO:0000256" key="2">
    <source>
        <dbReference type="SAM" id="MobiDB-lite"/>
    </source>
</evidence>
<dbReference type="EMBL" id="CP000416">
    <property type="protein sequence ID" value="ABJ64431.1"/>
    <property type="molecule type" value="Genomic_DNA"/>
</dbReference>
<dbReference type="RefSeq" id="WP_011668004.1">
    <property type="nucleotide sequence ID" value="NC_008497.1"/>
</dbReference>
<dbReference type="SMR" id="Q03QU1"/>
<dbReference type="STRING" id="387344.LVIS_1329"/>
<dbReference type="GeneID" id="56993099"/>
<dbReference type="KEGG" id="lbr:LVIS_1329"/>
<dbReference type="eggNOG" id="COG0443">
    <property type="taxonomic scope" value="Bacteria"/>
</dbReference>
<dbReference type="HOGENOM" id="CLU_005965_2_4_9"/>
<dbReference type="Proteomes" id="UP000001652">
    <property type="component" value="Chromosome"/>
</dbReference>
<dbReference type="GO" id="GO:0005524">
    <property type="term" value="F:ATP binding"/>
    <property type="evidence" value="ECO:0007669"/>
    <property type="project" value="UniProtKB-UniRule"/>
</dbReference>
<dbReference type="GO" id="GO:0140662">
    <property type="term" value="F:ATP-dependent protein folding chaperone"/>
    <property type="evidence" value="ECO:0007669"/>
    <property type="project" value="InterPro"/>
</dbReference>
<dbReference type="GO" id="GO:0051082">
    <property type="term" value="F:unfolded protein binding"/>
    <property type="evidence" value="ECO:0007669"/>
    <property type="project" value="InterPro"/>
</dbReference>
<dbReference type="CDD" id="cd10234">
    <property type="entry name" value="ASKHA_NBD_HSP70_DnaK-like"/>
    <property type="match status" value="1"/>
</dbReference>
<dbReference type="FunFam" id="2.60.34.10:FF:000014">
    <property type="entry name" value="Chaperone protein DnaK HSP70"/>
    <property type="match status" value="1"/>
</dbReference>
<dbReference type="FunFam" id="3.30.420.40:FF:000071">
    <property type="entry name" value="Molecular chaperone DnaK"/>
    <property type="match status" value="1"/>
</dbReference>
<dbReference type="FunFam" id="3.90.640.10:FF:000003">
    <property type="entry name" value="Molecular chaperone DnaK"/>
    <property type="match status" value="1"/>
</dbReference>
<dbReference type="Gene3D" id="1.20.1270.10">
    <property type="match status" value="1"/>
</dbReference>
<dbReference type="Gene3D" id="3.30.420.40">
    <property type="match status" value="2"/>
</dbReference>
<dbReference type="Gene3D" id="3.90.640.10">
    <property type="entry name" value="Actin, Chain A, domain 4"/>
    <property type="match status" value="1"/>
</dbReference>
<dbReference type="Gene3D" id="2.60.34.10">
    <property type="entry name" value="Substrate Binding Domain Of DNAk, Chain A, domain 1"/>
    <property type="match status" value="1"/>
</dbReference>
<dbReference type="HAMAP" id="MF_00332">
    <property type="entry name" value="DnaK"/>
    <property type="match status" value="1"/>
</dbReference>
<dbReference type="InterPro" id="IPR043129">
    <property type="entry name" value="ATPase_NBD"/>
</dbReference>
<dbReference type="InterPro" id="IPR012725">
    <property type="entry name" value="Chaperone_DnaK"/>
</dbReference>
<dbReference type="InterPro" id="IPR018181">
    <property type="entry name" value="Heat_shock_70_CS"/>
</dbReference>
<dbReference type="InterPro" id="IPR029048">
    <property type="entry name" value="HSP70_C_sf"/>
</dbReference>
<dbReference type="InterPro" id="IPR029047">
    <property type="entry name" value="HSP70_peptide-bd_sf"/>
</dbReference>
<dbReference type="InterPro" id="IPR013126">
    <property type="entry name" value="Hsp_70_fam"/>
</dbReference>
<dbReference type="NCBIfam" id="NF001413">
    <property type="entry name" value="PRK00290.1"/>
    <property type="match status" value="1"/>
</dbReference>
<dbReference type="NCBIfam" id="TIGR02350">
    <property type="entry name" value="prok_dnaK"/>
    <property type="match status" value="1"/>
</dbReference>
<dbReference type="PANTHER" id="PTHR19375">
    <property type="entry name" value="HEAT SHOCK PROTEIN 70KDA"/>
    <property type="match status" value="1"/>
</dbReference>
<dbReference type="Pfam" id="PF00012">
    <property type="entry name" value="HSP70"/>
    <property type="match status" value="1"/>
</dbReference>
<dbReference type="PRINTS" id="PR00301">
    <property type="entry name" value="HEATSHOCK70"/>
</dbReference>
<dbReference type="SUPFAM" id="SSF53067">
    <property type="entry name" value="Actin-like ATPase domain"/>
    <property type="match status" value="2"/>
</dbReference>
<dbReference type="SUPFAM" id="SSF100934">
    <property type="entry name" value="Heat shock protein 70kD (HSP70), C-terminal subdomain"/>
    <property type="match status" value="1"/>
</dbReference>
<dbReference type="SUPFAM" id="SSF100920">
    <property type="entry name" value="Heat shock protein 70kD (HSP70), peptide-binding domain"/>
    <property type="match status" value="1"/>
</dbReference>
<dbReference type="PROSITE" id="PS00297">
    <property type="entry name" value="HSP70_1"/>
    <property type="match status" value="1"/>
</dbReference>
<dbReference type="PROSITE" id="PS00329">
    <property type="entry name" value="HSP70_2"/>
    <property type="match status" value="1"/>
</dbReference>
<dbReference type="PROSITE" id="PS01036">
    <property type="entry name" value="HSP70_3"/>
    <property type="match status" value="1"/>
</dbReference>
<proteinExistence type="inferred from homology"/>
<protein>
    <recommendedName>
        <fullName evidence="1">Chaperone protein DnaK</fullName>
    </recommendedName>
    <alternativeName>
        <fullName evidence="1">HSP70</fullName>
    </alternativeName>
    <alternativeName>
        <fullName evidence="1">Heat shock 70 kDa protein</fullName>
    </alternativeName>
    <alternativeName>
        <fullName evidence="1">Heat shock protein 70</fullName>
    </alternativeName>
</protein>
<organism>
    <name type="scientific">Levilactobacillus brevis (strain ATCC 367 / BCRC 12310 / CIP 105137 / JCM 1170 / LMG 11437 / NCIMB 947 / NCTC 947)</name>
    <name type="common">Lactobacillus brevis</name>
    <dbReference type="NCBI Taxonomy" id="387344"/>
    <lineage>
        <taxon>Bacteria</taxon>
        <taxon>Bacillati</taxon>
        <taxon>Bacillota</taxon>
        <taxon>Bacilli</taxon>
        <taxon>Lactobacillales</taxon>
        <taxon>Lactobacillaceae</taxon>
        <taxon>Levilactobacillus</taxon>
    </lineage>
</organism>